<protein>
    <recommendedName>
        <fullName>Ribonuclease 3-like protein 2</fullName>
        <ecNumber>3.1.26.-</ecNumber>
    </recommendedName>
    <alternativeName>
        <fullName>Ribonuclease III-like protein 2</fullName>
        <shortName>RNase III-like protein 2</shortName>
    </alternativeName>
</protein>
<organism>
    <name type="scientific">Oryza sativa subsp. japonica</name>
    <name type="common">Rice</name>
    <dbReference type="NCBI Taxonomy" id="39947"/>
    <lineage>
        <taxon>Eukaryota</taxon>
        <taxon>Viridiplantae</taxon>
        <taxon>Streptophyta</taxon>
        <taxon>Embryophyta</taxon>
        <taxon>Tracheophyta</taxon>
        <taxon>Spermatophyta</taxon>
        <taxon>Magnoliopsida</taxon>
        <taxon>Liliopsida</taxon>
        <taxon>Poales</taxon>
        <taxon>Poaceae</taxon>
        <taxon>BOP clade</taxon>
        <taxon>Oryzoideae</taxon>
        <taxon>Oryzeae</taxon>
        <taxon>Oryzinae</taxon>
        <taxon>Oryza</taxon>
        <taxon>Oryza sativa</taxon>
    </lineage>
</organism>
<dbReference type="EC" id="3.1.26.-"/>
<dbReference type="EMBL" id="AC115634">
    <property type="protein sequence ID" value="AAV67838.1"/>
    <property type="status" value="ALT_SEQ"/>
    <property type="molecule type" value="Genomic_DNA"/>
</dbReference>
<dbReference type="EMBL" id="AC137002">
    <property type="protein sequence ID" value="AAT85223.1"/>
    <property type="status" value="ALT_SEQ"/>
    <property type="molecule type" value="Genomic_DNA"/>
</dbReference>
<dbReference type="EMBL" id="AP008211">
    <property type="protein sequence ID" value="BAF16975.1"/>
    <property type="status" value="ALT_SEQ"/>
    <property type="molecule type" value="Genomic_DNA"/>
</dbReference>
<dbReference type="EMBL" id="AP014961">
    <property type="protein sequence ID" value="BAS93091.1"/>
    <property type="molecule type" value="Genomic_DNA"/>
</dbReference>
<dbReference type="SMR" id="Q6ATG6"/>
<dbReference type="FunCoup" id="Q6ATG6">
    <property type="interactions" value="5"/>
</dbReference>
<dbReference type="STRING" id="39947.Q6ATG6"/>
<dbReference type="PaxDb" id="39947-Q6ATG6"/>
<dbReference type="EnsemblPlants" id="Os05t0271300-00">
    <property type="protein sequence ID" value="Os05t0271300-00"/>
    <property type="gene ID" value="Os05g0271300"/>
</dbReference>
<dbReference type="Gramene" id="Os05t0271300-00">
    <property type="protein sequence ID" value="Os05t0271300-00"/>
    <property type="gene ID" value="Os05g0271300"/>
</dbReference>
<dbReference type="KEGG" id="dosa:Os05g0271300"/>
<dbReference type="eggNOG" id="KOG0701">
    <property type="taxonomic scope" value="Eukaryota"/>
</dbReference>
<dbReference type="HOGENOM" id="CLU_000907_5_3_1"/>
<dbReference type="InParanoid" id="Q6ATG6"/>
<dbReference type="OMA" id="KLWMIFR"/>
<dbReference type="Proteomes" id="UP000000763">
    <property type="component" value="Chromosome 5"/>
</dbReference>
<dbReference type="Proteomes" id="UP000059680">
    <property type="component" value="Chromosome 5"/>
</dbReference>
<dbReference type="GO" id="GO:0005737">
    <property type="term" value="C:cytoplasm"/>
    <property type="evidence" value="ECO:0000318"/>
    <property type="project" value="GO_Central"/>
</dbReference>
<dbReference type="GO" id="GO:0005634">
    <property type="term" value="C:nucleus"/>
    <property type="evidence" value="ECO:0000318"/>
    <property type="project" value="GO_Central"/>
</dbReference>
<dbReference type="GO" id="GO:0046872">
    <property type="term" value="F:metal ion binding"/>
    <property type="evidence" value="ECO:0007669"/>
    <property type="project" value="UniProtKB-KW"/>
</dbReference>
<dbReference type="GO" id="GO:0004525">
    <property type="term" value="F:ribonuclease III activity"/>
    <property type="evidence" value="ECO:0000318"/>
    <property type="project" value="GO_Central"/>
</dbReference>
<dbReference type="GO" id="GO:0003723">
    <property type="term" value="F:RNA binding"/>
    <property type="evidence" value="ECO:0000318"/>
    <property type="project" value="GO_Central"/>
</dbReference>
<dbReference type="GO" id="GO:0030422">
    <property type="term" value="P:siRNA processing"/>
    <property type="evidence" value="ECO:0000318"/>
    <property type="project" value="GO_Central"/>
</dbReference>
<dbReference type="CDD" id="cd00593">
    <property type="entry name" value="RIBOc"/>
    <property type="match status" value="1"/>
</dbReference>
<dbReference type="FunFam" id="1.10.1520.10:FF:000004">
    <property type="entry name" value="Endoribonuclease dicer-like 1"/>
    <property type="match status" value="1"/>
</dbReference>
<dbReference type="Gene3D" id="3.30.160.20">
    <property type="match status" value="1"/>
</dbReference>
<dbReference type="Gene3D" id="1.10.1520.10">
    <property type="entry name" value="Ribonuclease III domain"/>
    <property type="match status" value="1"/>
</dbReference>
<dbReference type="InterPro" id="IPR014720">
    <property type="entry name" value="dsRBD_dom"/>
</dbReference>
<dbReference type="InterPro" id="IPR000999">
    <property type="entry name" value="RNase_III_dom"/>
</dbReference>
<dbReference type="InterPro" id="IPR036389">
    <property type="entry name" value="RNase_III_sf"/>
</dbReference>
<dbReference type="PANTHER" id="PTHR14950">
    <property type="entry name" value="DICER-RELATED"/>
    <property type="match status" value="1"/>
</dbReference>
<dbReference type="PANTHER" id="PTHR14950:SF49">
    <property type="entry name" value="RIBONUCLEASE 3-LIKE PROTEIN 2-RELATED"/>
    <property type="match status" value="1"/>
</dbReference>
<dbReference type="Pfam" id="PF00035">
    <property type="entry name" value="dsrm"/>
    <property type="match status" value="1"/>
</dbReference>
<dbReference type="Pfam" id="PF00636">
    <property type="entry name" value="Ribonuclease_3"/>
    <property type="match status" value="1"/>
</dbReference>
<dbReference type="SMART" id="SM00358">
    <property type="entry name" value="DSRM"/>
    <property type="match status" value="1"/>
</dbReference>
<dbReference type="SMART" id="SM00535">
    <property type="entry name" value="RIBOc"/>
    <property type="match status" value="1"/>
</dbReference>
<dbReference type="SUPFAM" id="SSF54768">
    <property type="entry name" value="dsRNA-binding domain-like"/>
    <property type="match status" value="1"/>
</dbReference>
<dbReference type="SUPFAM" id="SSF69065">
    <property type="entry name" value="RNase III domain-like"/>
    <property type="match status" value="1"/>
</dbReference>
<dbReference type="PROSITE" id="PS50137">
    <property type="entry name" value="DS_RBD"/>
    <property type="match status" value="1"/>
</dbReference>
<dbReference type="PROSITE" id="PS00517">
    <property type="entry name" value="RNASE_3_1"/>
    <property type="match status" value="1"/>
</dbReference>
<dbReference type="PROSITE" id="PS50142">
    <property type="entry name" value="RNASE_3_2"/>
    <property type="match status" value="1"/>
</dbReference>
<proteinExistence type="evidence at transcript level"/>
<gene>
    <name type="ordered locus">Os05g0271300</name>
    <name type="ordered locus">LOC_Os05g18850</name>
    <name type="ORF">OJ1653_D06.9</name>
    <name type="ORF">OSJNBb0061M13.3</name>
</gene>
<reference key="1">
    <citation type="journal article" date="2005" name="Mol. Genet. Genomics">
        <title>A fine physical map of the rice chromosome 5.</title>
        <authorList>
            <person name="Cheng C.-H."/>
            <person name="Chung M.C."/>
            <person name="Liu S.-M."/>
            <person name="Chen S.-K."/>
            <person name="Kao F.Y."/>
            <person name="Lin S.-J."/>
            <person name="Hsiao S.-H."/>
            <person name="Tseng I.C."/>
            <person name="Hsing Y.-I.C."/>
            <person name="Wu H.-P."/>
            <person name="Chen C.-S."/>
            <person name="Shaw J.-F."/>
            <person name="Wu J."/>
            <person name="Matsumoto T."/>
            <person name="Sasaki T."/>
            <person name="Chen H.-C."/>
            <person name="Chow T.-Y."/>
        </authorList>
    </citation>
    <scope>NUCLEOTIDE SEQUENCE [LARGE SCALE GENOMIC DNA]</scope>
    <source>
        <strain>cv. Nipponbare</strain>
    </source>
</reference>
<reference key="2">
    <citation type="journal article" date="2005" name="Nature">
        <title>The map-based sequence of the rice genome.</title>
        <authorList>
            <consortium name="International rice genome sequencing project (IRGSP)"/>
        </authorList>
    </citation>
    <scope>NUCLEOTIDE SEQUENCE [LARGE SCALE GENOMIC DNA]</scope>
    <source>
        <strain>cv. Nipponbare</strain>
    </source>
</reference>
<reference key="3">
    <citation type="journal article" date="2008" name="Nucleic Acids Res.">
        <title>The rice annotation project database (RAP-DB): 2008 update.</title>
        <authorList>
            <consortium name="The rice annotation project (RAP)"/>
        </authorList>
    </citation>
    <scope>GENOME REANNOTATION</scope>
    <source>
        <strain>cv. Nipponbare</strain>
    </source>
</reference>
<reference key="4">
    <citation type="journal article" date="2013" name="Rice">
        <title>Improvement of the Oryza sativa Nipponbare reference genome using next generation sequence and optical map data.</title>
        <authorList>
            <person name="Kawahara Y."/>
            <person name="de la Bastide M."/>
            <person name="Hamilton J.P."/>
            <person name="Kanamori H."/>
            <person name="McCombie W.R."/>
            <person name="Ouyang S."/>
            <person name="Schwartz D.C."/>
            <person name="Tanaka T."/>
            <person name="Wu J."/>
            <person name="Zhou S."/>
            <person name="Childs K.L."/>
            <person name="Davidson R.M."/>
            <person name="Lin H."/>
            <person name="Quesada-Ocampo L."/>
            <person name="Vaillancourt B."/>
            <person name="Sakai H."/>
            <person name="Lee S.S."/>
            <person name="Kim J."/>
            <person name="Numa H."/>
            <person name="Itoh T."/>
            <person name="Buell C.R."/>
            <person name="Matsumoto T."/>
        </authorList>
    </citation>
    <scope>GENOME REANNOTATION</scope>
    <source>
        <strain>cv. Nipponbare</strain>
    </source>
</reference>
<reference key="5">
    <citation type="journal article" date="2008" name="BMC Genomics">
        <title>Genome-wide identification, organization and phylogenetic analysis of dicer-like, argonaute and RNA-dependent RNA polymerase gene families and their expression analysis during reproductive development and stress in rice.</title>
        <authorList>
            <person name="Kapoor M."/>
            <person name="Arora R."/>
            <person name="Lama T."/>
            <person name="Nijhawan A."/>
            <person name="Khurana J.P."/>
            <person name="Tyagi A.K."/>
            <person name="Kapoor S."/>
        </authorList>
    </citation>
    <scope>GENE FAMILY</scope>
    <scope>NOMENCLATURE</scope>
</reference>
<comment type="function">
    <text evidence="1">Cleaves double-stranded RNA (dsRNA).</text>
</comment>
<comment type="cofactor">
    <cofactor evidence="1">
        <name>Mg(2+)</name>
        <dbReference type="ChEBI" id="CHEBI:18420"/>
    </cofactor>
    <cofactor evidence="1">
        <name>Mn(2+)</name>
        <dbReference type="ChEBI" id="CHEBI:29035"/>
    </cofactor>
</comment>
<comment type="sequence caution" evidence="5">
    <conflict type="erroneous gene model prediction">
        <sequence resource="EMBL-CDS" id="AAT85223"/>
    </conflict>
</comment>
<comment type="sequence caution" evidence="5">
    <conflict type="erroneous gene model prediction">
        <sequence resource="EMBL-CDS" id="AAV67838"/>
    </conflict>
</comment>
<comment type="sequence caution" evidence="5">
    <conflict type="erroneous gene model prediction">
        <sequence resource="EMBL-CDS" id="BAF16975"/>
    </conflict>
</comment>
<evidence type="ECO:0000250" key="1"/>
<evidence type="ECO:0000255" key="2">
    <source>
        <dbReference type="PROSITE-ProRule" id="PRU00177"/>
    </source>
</evidence>
<evidence type="ECO:0000255" key="3">
    <source>
        <dbReference type="PROSITE-ProRule" id="PRU00266"/>
    </source>
</evidence>
<evidence type="ECO:0000256" key="4">
    <source>
        <dbReference type="SAM" id="MobiDB-lite"/>
    </source>
</evidence>
<evidence type="ECO:0000305" key="5"/>
<accession>Q6ATG6</accession>
<accession>A0A0P0WJY4</accession>
<name>RTL2_ORYSJ</name>
<sequence length="317" mass="34954">MAPPPAMKPASRKRGPPAPDPVELPPPGFVADRAEAAARVERLLRYQFRDGRLLEEALTHQSFADDAVSYQRLEFVGDSALGLAFSNFLYLTNPTLGPGPLSTLRAANISTEKLARVAVRHDLYPLLRRNCPRLDLLVGQFIETVKQEPEDDLSTVPYGGSVVKAPKVLADIVEAIAAAVYVDCKFDLEKLWKVTRWLFEPIITAETIDEQPVTMLHELCQKHGKMAQFKTWQKGGMTVVNVFVAGELVGIGSSEQKVIAKLNAARDATRKLAGAKKQVLTTGVGNGLGDEIGELRECKQKLNEQCSRQNWPKPIFK</sequence>
<keyword id="KW-0255">Endonuclease</keyword>
<keyword id="KW-0378">Hydrolase</keyword>
<keyword id="KW-0460">Magnesium</keyword>
<keyword id="KW-0464">Manganese</keyword>
<keyword id="KW-0479">Metal-binding</keyword>
<keyword id="KW-0540">Nuclease</keyword>
<keyword id="KW-1185">Reference proteome</keyword>
<keyword id="KW-0694">RNA-binding</keyword>
<feature type="chain" id="PRO_0000378423" description="Ribonuclease 3-like protein 2">
    <location>
        <begin position="1"/>
        <end position="317"/>
    </location>
</feature>
<feature type="domain" description="RNase III" evidence="2">
    <location>
        <begin position="37"/>
        <end position="185"/>
    </location>
</feature>
<feature type="domain" description="DRBM" evidence="3">
    <location>
        <begin position="211"/>
        <end position="274"/>
    </location>
</feature>
<feature type="region of interest" description="Disordered" evidence="4">
    <location>
        <begin position="1"/>
        <end position="26"/>
    </location>
</feature>
<feature type="compositionally biased region" description="Pro residues" evidence="4">
    <location>
        <begin position="16"/>
        <end position="26"/>
    </location>
</feature>
<feature type="binding site" evidence="1">
    <location>
        <position position="74"/>
    </location>
    <ligand>
        <name>Mg(2+)</name>
        <dbReference type="ChEBI" id="CHEBI:18420"/>
    </ligand>
</feature>
<feature type="binding site" evidence="1">
    <location>
        <position position="171"/>
    </location>
    <ligand>
        <name>Mg(2+)</name>
        <dbReference type="ChEBI" id="CHEBI:18420"/>
    </ligand>
</feature>
<feature type="binding site" evidence="1">
    <location>
        <position position="174"/>
    </location>
    <ligand>
        <name>Mg(2+)</name>
        <dbReference type="ChEBI" id="CHEBI:18420"/>
    </ligand>
</feature>
<feature type="site" description="Important for activity" evidence="1">
    <location>
        <position position="167"/>
    </location>
</feature>